<comment type="function">
    <text evidence="3">Water channel required to facilitate the transport of water across membranes (PubMed:26959825). Contributes to water uptake of spores during the early stages of spore germination (PubMed:26959825). Aquaporins AQP1 and AQP2 act as extracellular pH sensors and enable the spores to hydrate under favorable conditions and to commence germination (PubMed:26959825). Wounded vegetables and fruit present acidic pH, so the optimal pH range for germination is adapted to the relevant host pH (PubMed:26959825).</text>
</comment>
<comment type="catalytic activity">
    <reaction evidence="3">
        <text>H2O(in) = H2O(out)</text>
        <dbReference type="Rhea" id="RHEA:29667"/>
        <dbReference type="ChEBI" id="CHEBI:15377"/>
    </reaction>
</comment>
<comment type="subcellular location">
    <subcellularLocation>
        <location evidence="3">Cell membrane</location>
        <topology evidence="1">Multi-pass membrane protein</topology>
    </subcellularLocation>
</comment>
<comment type="induction">
    <text evidence="3">Expression is high at the spore resting stage and further increases about 1.5-fold during spore swelling, up to 90 minutes after induction of germination, followed by a 6.5-fold decrease before and during polar growth.</text>
</comment>
<comment type="domain">
    <text evidence="6">Aquaporins contain two tandem repeats each containing three membrane-spanning domains and a pore-forming loop with the signature motif Asn-Pro-Ala (NPA).</text>
</comment>
<comment type="domain">
    <text evidence="3">The His-85 and His-275 residues facing the outside of the cell are involved in pH sensing.</text>
</comment>
<comment type="similarity">
    <text evidence="5">Belongs to the MIP/aquaporin (TC 1.A.8) family.</text>
</comment>
<gene>
    <name evidence="4" type="primary">AQP1</name>
    <name type="ORF">RO3G_15659</name>
</gene>
<reference key="1">
    <citation type="journal article" date="2009" name="PLoS Genet.">
        <title>Genomic analysis of the basal lineage fungus Rhizopus oryzae reveals a whole-genome duplication.</title>
        <authorList>
            <person name="Ma L.-J."/>
            <person name="Ibrahim A.S."/>
            <person name="Skory C."/>
            <person name="Grabherr M.G."/>
            <person name="Burger G."/>
            <person name="Butler M."/>
            <person name="Elias M."/>
            <person name="Idnurm A."/>
            <person name="Lang B.F."/>
            <person name="Sone T."/>
            <person name="Abe A."/>
            <person name="Calvo S.E."/>
            <person name="Corrochano L.M."/>
            <person name="Engels R."/>
            <person name="Fu J."/>
            <person name="Hansberg W."/>
            <person name="Kim J.-M."/>
            <person name="Kodira C.D."/>
            <person name="Koehrsen M.J."/>
            <person name="Liu B."/>
            <person name="Miranda-Saavedra D."/>
            <person name="O'Leary S."/>
            <person name="Ortiz-Castellanos L."/>
            <person name="Poulter R."/>
            <person name="Rodriguez-Romero J."/>
            <person name="Ruiz-Herrera J."/>
            <person name="Shen Y.-Q."/>
            <person name="Zeng Q."/>
            <person name="Galagan J."/>
            <person name="Birren B.W."/>
            <person name="Cuomo C.A."/>
            <person name="Wickes B.L."/>
        </authorList>
    </citation>
    <scope>NUCLEOTIDE SEQUENCE [LARGE SCALE GENOMIC DNA]</scope>
    <source>
        <strain>RA 99-880 / ATCC MYA-4621 / FGSC 9543 / NRRL 43880</strain>
    </source>
</reference>
<reference key="2">
    <citation type="journal article" date="2016" name="PLoS ONE">
        <title>The Role of Aquaporins in pH-Dependent Germination of Rhizopus delemar Spores.</title>
        <authorList>
            <person name="Turgeman T."/>
            <person name="Shatil-Cohen A."/>
            <person name="Moshelion M."/>
            <person name="Teper-Bamnolker P."/>
            <person name="Skory C.D."/>
            <person name="Lichter A."/>
            <person name="Eshel D."/>
        </authorList>
    </citation>
    <scope>FUNCTION</scope>
    <scope>DOMAIN</scope>
    <scope>INDUCTION</scope>
    <scope>SUBCELLULAR LOCATION</scope>
    <scope>TOPOLOGY</scope>
    <scope>TRANSPORTER ACTIVITY</scope>
    <scope>MUTAGENESIS OF HIS-85 AND HIS-275</scope>
</reference>
<name>AQP1_RHIO9</name>
<feature type="chain" id="PRO_0000457438" description="Aquaporin-1">
    <location>
        <begin position="1"/>
        <end position="306"/>
    </location>
</feature>
<feature type="topological domain" description="Cytoplasmic" evidence="6">
    <location>
        <begin position="1"/>
        <end position="59"/>
    </location>
</feature>
<feature type="transmembrane region" description="Helical" evidence="1">
    <location>
        <begin position="60"/>
        <end position="80"/>
    </location>
</feature>
<feature type="topological domain" description="Extracellular" evidence="6">
    <location>
        <begin position="81"/>
        <end position="92"/>
    </location>
</feature>
<feature type="transmembrane region" description="Helical" evidence="1">
    <location>
        <begin position="93"/>
        <end position="113"/>
    </location>
</feature>
<feature type="topological domain" description="Cytoplasmic" evidence="6">
    <location>
        <begin position="114"/>
        <end position="145"/>
    </location>
</feature>
<feature type="transmembrane region" description="Helical" evidence="1">
    <location>
        <begin position="146"/>
        <end position="166"/>
    </location>
</feature>
<feature type="topological domain" description="Extracellular" evidence="6">
    <location>
        <begin position="167"/>
        <end position="192"/>
    </location>
</feature>
<feature type="transmembrane region" description="Helical" evidence="1">
    <location>
        <begin position="193"/>
        <end position="213"/>
    </location>
</feature>
<feature type="topological domain" description="Cytoplasmic" evidence="6">
    <location>
        <begin position="214"/>
        <end position="226"/>
    </location>
</feature>
<feature type="transmembrane region" description="Helical" evidence="1">
    <location>
        <begin position="227"/>
        <end position="247"/>
    </location>
</feature>
<feature type="topological domain" description="Extracellular" evidence="6">
    <location>
        <begin position="248"/>
        <end position="278"/>
    </location>
</feature>
<feature type="transmembrane region" description="Helical" evidence="1">
    <location>
        <begin position="279"/>
        <end position="299"/>
    </location>
</feature>
<feature type="topological domain" description="Cytoplasmic" evidence="6">
    <location>
        <begin position="300"/>
        <end position="306"/>
    </location>
</feature>
<feature type="region of interest" description="Disordered" evidence="2">
    <location>
        <begin position="1"/>
        <end position="24"/>
    </location>
</feature>
<feature type="short sequence motif" description="NPA 1" evidence="6">
    <location>
        <begin position="119"/>
        <end position="121"/>
    </location>
</feature>
<feature type="short sequence motif" description="NPA 2" evidence="6">
    <location>
        <begin position="250"/>
        <end position="252"/>
    </location>
</feature>
<feature type="compositionally biased region" description="Polar residues" evidence="2">
    <location>
        <begin position="1"/>
        <end position="23"/>
    </location>
</feature>
<feature type="mutagenesis site" description="Affects pH sensing; when associated with A-275." evidence="4">
    <original>H</original>
    <variation>A</variation>
    <location>
        <position position="85"/>
    </location>
</feature>
<feature type="mutagenesis site" description="Affects pH sensing; when associated with A-85." evidence="3">
    <original>H</original>
    <variation>A</variation>
    <location>
        <position position="275"/>
    </location>
</feature>
<keyword id="KW-1003">Cell membrane</keyword>
<keyword id="KW-0472">Membrane</keyword>
<keyword id="KW-1185">Reference proteome</keyword>
<keyword id="KW-0677">Repeat</keyword>
<keyword id="KW-0812">Transmembrane</keyword>
<keyword id="KW-1133">Transmembrane helix</keyword>
<keyword id="KW-0813">Transport</keyword>
<dbReference type="EMBL" id="CH476748">
    <property type="protein sequence ID" value="EIE90948.1"/>
    <property type="molecule type" value="Genomic_DNA"/>
</dbReference>
<dbReference type="SMR" id="I1CR68"/>
<dbReference type="STRING" id="246409.I1CR68"/>
<dbReference type="VEuPathDB" id="FungiDB:RO3G_15659"/>
<dbReference type="eggNOG" id="KOG0224">
    <property type="taxonomic scope" value="Eukaryota"/>
</dbReference>
<dbReference type="InParanoid" id="I1CR68"/>
<dbReference type="OMA" id="FTSHHYY"/>
<dbReference type="OrthoDB" id="59299at4827"/>
<dbReference type="Proteomes" id="UP000009138">
    <property type="component" value="Unassembled WGS sequence"/>
</dbReference>
<dbReference type="GO" id="GO:0005886">
    <property type="term" value="C:plasma membrane"/>
    <property type="evidence" value="ECO:0007669"/>
    <property type="project" value="UniProtKB-SubCell"/>
</dbReference>
<dbReference type="GO" id="GO:0015254">
    <property type="term" value="F:glycerol channel activity"/>
    <property type="evidence" value="ECO:0007669"/>
    <property type="project" value="TreeGrafter"/>
</dbReference>
<dbReference type="GO" id="GO:0015250">
    <property type="term" value="F:water channel activity"/>
    <property type="evidence" value="ECO:0007669"/>
    <property type="project" value="TreeGrafter"/>
</dbReference>
<dbReference type="CDD" id="cd00333">
    <property type="entry name" value="MIP"/>
    <property type="match status" value="1"/>
</dbReference>
<dbReference type="Gene3D" id="1.20.1080.10">
    <property type="entry name" value="Glycerol uptake facilitator protein"/>
    <property type="match status" value="1"/>
</dbReference>
<dbReference type="InterPro" id="IPR023271">
    <property type="entry name" value="Aquaporin-like"/>
</dbReference>
<dbReference type="InterPro" id="IPR000425">
    <property type="entry name" value="MIP"/>
</dbReference>
<dbReference type="InterPro" id="IPR050363">
    <property type="entry name" value="MIP/Aquaporin"/>
</dbReference>
<dbReference type="InterPro" id="IPR022357">
    <property type="entry name" value="MIP_CS"/>
</dbReference>
<dbReference type="NCBIfam" id="TIGR00861">
    <property type="entry name" value="MIP"/>
    <property type="match status" value="1"/>
</dbReference>
<dbReference type="PANTHER" id="PTHR43829">
    <property type="entry name" value="AQUAPORIN OR AQUAGLYCEROPORIN RELATED"/>
    <property type="match status" value="1"/>
</dbReference>
<dbReference type="PANTHER" id="PTHR43829:SF9">
    <property type="entry name" value="AQUAPORIN-9"/>
    <property type="match status" value="1"/>
</dbReference>
<dbReference type="Pfam" id="PF00230">
    <property type="entry name" value="MIP"/>
    <property type="match status" value="1"/>
</dbReference>
<dbReference type="PRINTS" id="PR00783">
    <property type="entry name" value="MINTRINSICP"/>
</dbReference>
<dbReference type="SUPFAM" id="SSF81338">
    <property type="entry name" value="Aquaporin-like"/>
    <property type="match status" value="1"/>
</dbReference>
<dbReference type="PROSITE" id="PS00221">
    <property type="entry name" value="MIP"/>
    <property type="match status" value="1"/>
</dbReference>
<evidence type="ECO:0000255" key="1"/>
<evidence type="ECO:0000256" key="2">
    <source>
        <dbReference type="SAM" id="MobiDB-lite"/>
    </source>
</evidence>
<evidence type="ECO:0000269" key="3">
    <source>
    </source>
</evidence>
<evidence type="ECO:0000303" key="4">
    <source>
    </source>
</evidence>
<evidence type="ECO:0000305" key="5"/>
<evidence type="ECO:0000305" key="6">
    <source>
    </source>
</evidence>
<sequence>MASTHSSLTTVQNNANNKSNRTLNTERRLSMESSVFTLYNKAADELDTSQRSAFQACHREFLAEFIGTVILVLLTCGFCAEQTLHIEESKSWLTSSFGSGLSVLIGICVSGHVSGAHLNPAVTIAFCIFSGFPIRKVPSYITAQLLGAFAGAALLYIIIEPAIVQFDGGQRYILGEKSTAGIFGTYPPLYVGIGSAIASEIMGTAMLLLVIMVTGHPNNLPYKSAQGAMIALGITTISLCIGYTSGFSLNPARDFGPRLFTAIAGWGFDVFKVYHYYALVPMFAPILGGLVGLMLMMPFSFLSVRA</sequence>
<proteinExistence type="evidence at protein level"/>
<organism>
    <name type="scientific">Rhizopus delemar (strain RA 99-880 / ATCC MYA-4621 / FGSC 9543 / NRRL 43880)</name>
    <name type="common">Mucormycosis agent</name>
    <name type="synonym">Rhizopus arrhizus var. delemar</name>
    <dbReference type="NCBI Taxonomy" id="246409"/>
    <lineage>
        <taxon>Eukaryota</taxon>
        <taxon>Fungi</taxon>
        <taxon>Fungi incertae sedis</taxon>
        <taxon>Mucoromycota</taxon>
        <taxon>Mucoromycotina</taxon>
        <taxon>Mucoromycetes</taxon>
        <taxon>Mucorales</taxon>
        <taxon>Mucorineae</taxon>
        <taxon>Rhizopodaceae</taxon>
        <taxon>Rhizopus</taxon>
    </lineage>
</organism>
<protein>
    <recommendedName>
        <fullName evidence="4">Aquaporin-1</fullName>
    </recommendedName>
</protein>
<accession>I1CR68</accession>